<accession>B0KK63</accession>
<comment type="function">
    <text evidence="1">One of the primary rRNA binding proteins, it binds directly to 16S rRNA where it nucleates assembly of the head domain of the 30S subunit. Is located at the subunit interface close to the decoding center, probably blocks exit of the E-site tRNA.</text>
</comment>
<comment type="subunit">
    <text evidence="1">Part of the 30S ribosomal subunit. Contacts proteins S9 and S11.</text>
</comment>
<comment type="similarity">
    <text evidence="1">Belongs to the universal ribosomal protein uS7 family.</text>
</comment>
<gene>
    <name evidence="1" type="primary">rpsG</name>
    <name type="ordered locus">PputGB1_0480</name>
</gene>
<evidence type="ECO:0000255" key="1">
    <source>
        <dbReference type="HAMAP-Rule" id="MF_00480"/>
    </source>
</evidence>
<evidence type="ECO:0000305" key="2"/>
<keyword id="KW-0687">Ribonucleoprotein</keyword>
<keyword id="KW-0689">Ribosomal protein</keyword>
<keyword id="KW-0694">RNA-binding</keyword>
<keyword id="KW-0699">rRNA-binding</keyword>
<keyword id="KW-0820">tRNA-binding</keyword>
<protein>
    <recommendedName>
        <fullName evidence="1">Small ribosomal subunit protein uS7</fullName>
    </recommendedName>
    <alternativeName>
        <fullName evidence="2">30S ribosomal protein S7</fullName>
    </alternativeName>
</protein>
<reference key="1">
    <citation type="submission" date="2008-01" db="EMBL/GenBank/DDBJ databases">
        <title>Complete sequence of Pseudomonas putida GB-1.</title>
        <authorList>
            <consortium name="US DOE Joint Genome Institute"/>
            <person name="Copeland A."/>
            <person name="Lucas S."/>
            <person name="Lapidus A."/>
            <person name="Barry K."/>
            <person name="Glavina del Rio T."/>
            <person name="Dalin E."/>
            <person name="Tice H."/>
            <person name="Pitluck S."/>
            <person name="Bruce D."/>
            <person name="Goodwin L."/>
            <person name="Chertkov O."/>
            <person name="Brettin T."/>
            <person name="Detter J.C."/>
            <person name="Han C."/>
            <person name="Kuske C.R."/>
            <person name="Schmutz J."/>
            <person name="Larimer F."/>
            <person name="Land M."/>
            <person name="Hauser L."/>
            <person name="Kyrpides N."/>
            <person name="Kim E."/>
            <person name="McCarthy J.K."/>
            <person name="Richardson P."/>
        </authorList>
    </citation>
    <scope>NUCLEOTIDE SEQUENCE [LARGE SCALE GENOMIC DNA]</scope>
    <source>
        <strain>GB-1</strain>
    </source>
</reference>
<organism>
    <name type="scientific">Pseudomonas putida (strain GB-1)</name>
    <dbReference type="NCBI Taxonomy" id="76869"/>
    <lineage>
        <taxon>Bacteria</taxon>
        <taxon>Pseudomonadati</taxon>
        <taxon>Pseudomonadota</taxon>
        <taxon>Gammaproteobacteria</taxon>
        <taxon>Pseudomonadales</taxon>
        <taxon>Pseudomonadaceae</taxon>
        <taxon>Pseudomonas</taxon>
    </lineage>
</organism>
<dbReference type="EMBL" id="CP000926">
    <property type="protein sequence ID" value="ABY96391.1"/>
    <property type="molecule type" value="Genomic_DNA"/>
</dbReference>
<dbReference type="RefSeq" id="WP_003246741.1">
    <property type="nucleotide sequence ID" value="NC_010322.1"/>
</dbReference>
<dbReference type="SMR" id="B0KK63"/>
<dbReference type="GeneID" id="97165975"/>
<dbReference type="KEGG" id="ppg:PputGB1_0480"/>
<dbReference type="eggNOG" id="COG0049">
    <property type="taxonomic scope" value="Bacteria"/>
</dbReference>
<dbReference type="HOGENOM" id="CLU_072226_1_1_6"/>
<dbReference type="Proteomes" id="UP000002157">
    <property type="component" value="Chromosome"/>
</dbReference>
<dbReference type="GO" id="GO:0015935">
    <property type="term" value="C:small ribosomal subunit"/>
    <property type="evidence" value="ECO:0007669"/>
    <property type="project" value="InterPro"/>
</dbReference>
<dbReference type="GO" id="GO:0019843">
    <property type="term" value="F:rRNA binding"/>
    <property type="evidence" value="ECO:0007669"/>
    <property type="project" value="UniProtKB-UniRule"/>
</dbReference>
<dbReference type="GO" id="GO:0003735">
    <property type="term" value="F:structural constituent of ribosome"/>
    <property type="evidence" value="ECO:0007669"/>
    <property type="project" value="InterPro"/>
</dbReference>
<dbReference type="GO" id="GO:0000049">
    <property type="term" value="F:tRNA binding"/>
    <property type="evidence" value="ECO:0007669"/>
    <property type="project" value="UniProtKB-UniRule"/>
</dbReference>
<dbReference type="GO" id="GO:0006412">
    <property type="term" value="P:translation"/>
    <property type="evidence" value="ECO:0007669"/>
    <property type="project" value="UniProtKB-UniRule"/>
</dbReference>
<dbReference type="CDD" id="cd14869">
    <property type="entry name" value="uS7_Bacteria"/>
    <property type="match status" value="1"/>
</dbReference>
<dbReference type="FunFam" id="1.10.455.10:FF:000001">
    <property type="entry name" value="30S ribosomal protein S7"/>
    <property type="match status" value="1"/>
</dbReference>
<dbReference type="Gene3D" id="1.10.455.10">
    <property type="entry name" value="Ribosomal protein S7 domain"/>
    <property type="match status" value="1"/>
</dbReference>
<dbReference type="HAMAP" id="MF_00480_B">
    <property type="entry name" value="Ribosomal_uS7_B"/>
    <property type="match status" value="1"/>
</dbReference>
<dbReference type="InterPro" id="IPR000235">
    <property type="entry name" value="Ribosomal_uS7"/>
</dbReference>
<dbReference type="InterPro" id="IPR005717">
    <property type="entry name" value="Ribosomal_uS7_bac/org-type"/>
</dbReference>
<dbReference type="InterPro" id="IPR020606">
    <property type="entry name" value="Ribosomal_uS7_CS"/>
</dbReference>
<dbReference type="InterPro" id="IPR023798">
    <property type="entry name" value="Ribosomal_uS7_dom"/>
</dbReference>
<dbReference type="InterPro" id="IPR036823">
    <property type="entry name" value="Ribosomal_uS7_dom_sf"/>
</dbReference>
<dbReference type="NCBIfam" id="TIGR01029">
    <property type="entry name" value="rpsG_bact"/>
    <property type="match status" value="1"/>
</dbReference>
<dbReference type="PANTHER" id="PTHR11205">
    <property type="entry name" value="RIBOSOMAL PROTEIN S7"/>
    <property type="match status" value="1"/>
</dbReference>
<dbReference type="Pfam" id="PF00177">
    <property type="entry name" value="Ribosomal_S7"/>
    <property type="match status" value="1"/>
</dbReference>
<dbReference type="PIRSF" id="PIRSF002122">
    <property type="entry name" value="RPS7p_RPS7a_RPS5e_RPS7o"/>
    <property type="match status" value="1"/>
</dbReference>
<dbReference type="SUPFAM" id="SSF47973">
    <property type="entry name" value="Ribosomal protein S7"/>
    <property type="match status" value="1"/>
</dbReference>
<dbReference type="PROSITE" id="PS00052">
    <property type="entry name" value="RIBOSOMAL_S7"/>
    <property type="match status" value="1"/>
</dbReference>
<sequence>MPRRRVAAKREILDDPKYGSQILAKFMNHVMESGKKAVAERIVYGALDTVKARKNSDPLEIFEKALDAIAPLVEVKSRRVGGATYQVPVEVRPSRRNALAMRWLVDYARKRGEKSMALRLAGELLDAAEGKGAAVKKREDVHRMAEANKAFSHYRF</sequence>
<proteinExistence type="inferred from homology"/>
<name>RS7_PSEPG</name>
<feature type="chain" id="PRO_1000081294" description="Small ribosomal subunit protein uS7">
    <location>
        <begin position="1"/>
        <end position="156"/>
    </location>
</feature>